<keyword id="KW-1185">Reference proteome</keyword>
<keyword id="KW-0687">Ribonucleoprotein</keyword>
<keyword id="KW-0689">Ribosomal protein</keyword>
<sequence>MPPKQQLSKAAKAAAAMAGGKKSKKKWSKKSHKDKAQHAVILDQEKFDRILKEVPTYRYVSVSVLVDRLKIGGSMARVALRHLEREGIIKPISKHSKQAIYTRASAE</sequence>
<evidence type="ECO:0000256" key="1">
    <source>
        <dbReference type="SAM" id="MobiDB-lite"/>
    </source>
</evidence>
<evidence type="ECO:0000305" key="2"/>
<dbReference type="EMBL" id="CR380956">
    <property type="protein sequence ID" value="CAG60666.1"/>
    <property type="molecule type" value="Genomic_DNA"/>
</dbReference>
<dbReference type="RefSeq" id="XP_447719.1">
    <property type="nucleotide sequence ID" value="XM_447719.1"/>
</dbReference>
<dbReference type="SMR" id="Q6FPX5"/>
<dbReference type="FunCoup" id="Q6FPX5">
    <property type="interactions" value="989"/>
</dbReference>
<dbReference type="STRING" id="284593.Q6FPX5"/>
<dbReference type="EnsemblFungi" id="CAGL0J00165g-T">
    <property type="protein sequence ID" value="CAGL0J00165g-T-p1"/>
    <property type="gene ID" value="CAGL0J00165g"/>
</dbReference>
<dbReference type="KEGG" id="cgr:2889892"/>
<dbReference type="CGD" id="CAL0133522">
    <property type="gene designation" value="CAGL0J00165g"/>
</dbReference>
<dbReference type="VEuPathDB" id="FungiDB:B1J91_J00165g"/>
<dbReference type="VEuPathDB" id="FungiDB:CAGL0J00165g"/>
<dbReference type="eggNOG" id="KOG1767">
    <property type="taxonomic scope" value="Eukaryota"/>
</dbReference>
<dbReference type="HOGENOM" id="CLU_129470_4_0_1"/>
<dbReference type="InParanoid" id="Q6FPX5"/>
<dbReference type="OMA" id="RIVHHSG"/>
<dbReference type="Proteomes" id="UP000002428">
    <property type="component" value="Chromosome J"/>
</dbReference>
<dbReference type="GO" id="GO:1990904">
    <property type="term" value="C:ribonucleoprotein complex"/>
    <property type="evidence" value="ECO:0007669"/>
    <property type="project" value="UniProtKB-KW"/>
</dbReference>
<dbReference type="GO" id="GO:0005840">
    <property type="term" value="C:ribosome"/>
    <property type="evidence" value="ECO:0007669"/>
    <property type="project" value="UniProtKB-KW"/>
</dbReference>
<dbReference type="FunFam" id="3.30.63.20:FF:000001">
    <property type="entry name" value="40S ribosomal protein S25"/>
    <property type="match status" value="1"/>
</dbReference>
<dbReference type="Gene3D" id="3.30.63.20">
    <property type="match status" value="1"/>
</dbReference>
<dbReference type="InterPro" id="IPR004977">
    <property type="entry name" value="Ribosomal_eS25"/>
</dbReference>
<dbReference type="InterPro" id="IPR036390">
    <property type="entry name" value="WH_DNA-bd_sf"/>
</dbReference>
<dbReference type="PANTHER" id="PTHR12850">
    <property type="entry name" value="40S RIBOSOMAL PROTEIN S25"/>
    <property type="match status" value="1"/>
</dbReference>
<dbReference type="Pfam" id="PF03297">
    <property type="entry name" value="Ribosomal_S25"/>
    <property type="match status" value="1"/>
</dbReference>
<dbReference type="SUPFAM" id="SSF46785">
    <property type="entry name" value="Winged helix' DNA-binding domain"/>
    <property type="match status" value="1"/>
</dbReference>
<proteinExistence type="inferred from homology"/>
<accession>Q6FPX5</accession>
<reference key="1">
    <citation type="journal article" date="2004" name="Nature">
        <title>Genome evolution in yeasts.</title>
        <authorList>
            <person name="Dujon B."/>
            <person name="Sherman D."/>
            <person name="Fischer G."/>
            <person name="Durrens P."/>
            <person name="Casaregola S."/>
            <person name="Lafontaine I."/>
            <person name="de Montigny J."/>
            <person name="Marck C."/>
            <person name="Neuveglise C."/>
            <person name="Talla E."/>
            <person name="Goffard N."/>
            <person name="Frangeul L."/>
            <person name="Aigle M."/>
            <person name="Anthouard V."/>
            <person name="Babour A."/>
            <person name="Barbe V."/>
            <person name="Barnay S."/>
            <person name="Blanchin S."/>
            <person name="Beckerich J.-M."/>
            <person name="Beyne E."/>
            <person name="Bleykasten C."/>
            <person name="Boisrame A."/>
            <person name="Boyer J."/>
            <person name="Cattolico L."/>
            <person name="Confanioleri F."/>
            <person name="de Daruvar A."/>
            <person name="Despons L."/>
            <person name="Fabre E."/>
            <person name="Fairhead C."/>
            <person name="Ferry-Dumazet H."/>
            <person name="Groppi A."/>
            <person name="Hantraye F."/>
            <person name="Hennequin C."/>
            <person name="Jauniaux N."/>
            <person name="Joyet P."/>
            <person name="Kachouri R."/>
            <person name="Kerrest A."/>
            <person name="Koszul R."/>
            <person name="Lemaire M."/>
            <person name="Lesur I."/>
            <person name="Ma L."/>
            <person name="Muller H."/>
            <person name="Nicaud J.-M."/>
            <person name="Nikolski M."/>
            <person name="Oztas S."/>
            <person name="Ozier-Kalogeropoulos O."/>
            <person name="Pellenz S."/>
            <person name="Potier S."/>
            <person name="Richard G.-F."/>
            <person name="Straub M.-L."/>
            <person name="Suleau A."/>
            <person name="Swennen D."/>
            <person name="Tekaia F."/>
            <person name="Wesolowski-Louvel M."/>
            <person name="Westhof E."/>
            <person name="Wirth B."/>
            <person name="Zeniou-Meyer M."/>
            <person name="Zivanovic Y."/>
            <person name="Bolotin-Fukuhara M."/>
            <person name="Thierry A."/>
            <person name="Bouchier C."/>
            <person name="Caudron B."/>
            <person name="Scarpelli C."/>
            <person name="Gaillardin C."/>
            <person name="Weissenbach J."/>
            <person name="Wincker P."/>
            <person name="Souciet J.-L."/>
        </authorList>
    </citation>
    <scope>NUCLEOTIDE SEQUENCE [LARGE SCALE GENOMIC DNA]</scope>
    <source>
        <strain>ATCC 2001 / BCRC 20586 / JCM 3761 / NBRC 0622 / NRRL Y-65 / CBS 138</strain>
    </source>
</reference>
<gene>
    <name type="primary">RPS25</name>
    <name type="ordered locus">CAGL0J00165g</name>
</gene>
<feature type="chain" id="PRO_0000192886" description="Small ribosomal subunit protein eS25">
    <location>
        <begin position="1"/>
        <end position="107"/>
    </location>
</feature>
<feature type="region of interest" description="Disordered" evidence="1">
    <location>
        <begin position="1"/>
        <end position="35"/>
    </location>
</feature>
<feature type="compositionally biased region" description="Low complexity" evidence="1">
    <location>
        <begin position="8"/>
        <end position="20"/>
    </location>
</feature>
<feature type="compositionally biased region" description="Basic residues" evidence="1">
    <location>
        <begin position="21"/>
        <end position="35"/>
    </location>
</feature>
<comment type="similarity">
    <text evidence="2">Belongs to the eukaryotic ribosomal protein eS25 family.</text>
</comment>
<organism>
    <name type="scientific">Candida glabrata (strain ATCC 2001 / BCRC 20586 / JCM 3761 / NBRC 0622 / NRRL Y-65 / CBS 138)</name>
    <name type="common">Yeast</name>
    <name type="synonym">Nakaseomyces glabratus</name>
    <dbReference type="NCBI Taxonomy" id="284593"/>
    <lineage>
        <taxon>Eukaryota</taxon>
        <taxon>Fungi</taxon>
        <taxon>Dikarya</taxon>
        <taxon>Ascomycota</taxon>
        <taxon>Saccharomycotina</taxon>
        <taxon>Saccharomycetes</taxon>
        <taxon>Saccharomycetales</taxon>
        <taxon>Saccharomycetaceae</taxon>
        <taxon>Nakaseomyces</taxon>
    </lineage>
</organism>
<protein>
    <recommendedName>
        <fullName evidence="2">Small ribosomal subunit protein eS25</fullName>
    </recommendedName>
    <alternativeName>
        <fullName>40S ribosomal protein S25</fullName>
    </alternativeName>
</protein>
<name>RS25_CANGA</name>